<sequence>MTFLPQEFIRKVRDRAPLDTADVARFVQGVTAGDVTEGQIAAFAMAVYFNELPLSARIALTLAQRDSGDVLDWRGARLNGPVVDKHSTGGVGDLTSLVIGPMVAACGGYVPMISGRGLGHTGGTLDKLEAIPGYDVAPSVDMLRRVVRDAGLAIVGQTAQLAPADKRIYAVRDVTATVESISLITASILSKKLAAGVSALAMDVKVGSGAFMPSAEQSAELARSIVDVGNGAGMRTAATLTDMNQALAPCAGNAIEVRCAIDFLTGAARPARLEAVSFALAAQMLTMGGLAADAHDARRRLRAVLESGAAAERFARMVAALGGPADLVERPERHLPRAAAAAPVAAARAGWIERIDARALGLAVVGLGGGRAKIGDTLDYSVGLSALAELGERVEAGQPLATVHARDADSAAQATDAVRRAYRIGAEPPAQTRVVHAVIE</sequence>
<proteinExistence type="inferred from homology"/>
<reference key="1">
    <citation type="journal article" date="2010" name="Genome Biol. Evol.">
        <title>Continuing evolution of Burkholderia mallei through genome reduction and large-scale rearrangements.</title>
        <authorList>
            <person name="Losada L."/>
            <person name="Ronning C.M."/>
            <person name="DeShazer D."/>
            <person name="Woods D."/>
            <person name="Fedorova N."/>
            <person name="Kim H.S."/>
            <person name="Shabalina S.A."/>
            <person name="Pearson T.R."/>
            <person name="Brinkac L."/>
            <person name="Tan P."/>
            <person name="Nandi T."/>
            <person name="Crabtree J."/>
            <person name="Badger J."/>
            <person name="Beckstrom-Sternberg S."/>
            <person name="Saqib M."/>
            <person name="Schutzer S.E."/>
            <person name="Keim P."/>
            <person name="Nierman W.C."/>
        </authorList>
    </citation>
    <scope>NUCLEOTIDE SEQUENCE [LARGE SCALE GENOMIC DNA]</scope>
    <source>
        <strain>1106a</strain>
    </source>
</reference>
<dbReference type="EC" id="2.4.2.4" evidence="1"/>
<dbReference type="EMBL" id="CP000573">
    <property type="protein sequence ID" value="ABN92660.1"/>
    <property type="molecule type" value="Genomic_DNA"/>
</dbReference>
<dbReference type="RefSeq" id="WP_004537472.1">
    <property type="nucleotide sequence ID" value="NC_009078.1"/>
</dbReference>
<dbReference type="SMR" id="A3P8N2"/>
<dbReference type="KEGG" id="bpl:BURPS1106A_A2662"/>
<dbReference type="HOGENOM" id="CLU_025040_0_1_4"/>
<dbReference type="UniPathway" id="UPA00578">
    <property type="reaction ID" value="UER00638"/>
</dbReference>
<dbReference type="Proteomes" id="UP000006738">
    <property type="component" value="Chromosome II"/>
</dbReference>
<dbReference type="GO" id="GO:0005829">
    <property type="term" value="C:cytosol"/>
    <property type="evidence" value="ECO:0007669"/>
    <property type="project" value="TreeGrafter"/>
</dbReference>
<dbReference type="GO" id="GO:0004645">
    <property type="term" value="F:1,4-alpha-oligoglucan phosphorylase activity"/>
    <property type="evidence" value="ECO:0007669"/>
    <property type="project" value="InterPro"/>
</dbReference>
<dbReference type="GO" id="GO:0009032">
    <property type="term" value="F:thymidine phosphorylase activity"/>
    <property type="evidence" value="ECO:0007669"/>
    <property type="project" value="UniProtKB-UniRule"/>
</dbReference>
<dbReference type="GO" id="GO:0006206">
    <property type="term" value="P:pyrimidine nucleobase metabolic process"/>
    <property type="evidence" value="ECO:0007669"/>
    <property type="project" value="InterPro"/>
</dbReference>
<dbReference type="GO" id="GO:0046104">
    <property type="term" value="P:thymidine metabolic process"/>
    <property type="evidence" value="ECO:0007669"/>
    <property type="project" value="UniProtKB-UniRule"/>
</dbReference>
<dbReference type="FunFam" id="3.40.1030.10:FF:000001">
    <property type="entry name" value="Thymidine phosphorylase"/>
    <property type="match status" value="1"/>
</dbReference>
<dbReference type="Gene3D" id="3.40.1030.10">
    <property type="entry name" value="Nucleoside phosphorylase/phosphoribosyltransferase catalytic domain"/>
    <property type="match status" value="1"/>
</dbReference>
<dbReference type="Gene3D" id="3.90.1170.30">
    <property type="entry name" value="Pyrimidine nucleoside phosphorylase-like, C-terminal domain"/>
    <property type="match status" value="1"/>
</dbReference>
<dbReference type="Gene3D" id="1.20.970.10">
    <property type="entry name" value="Transferase, Pyrimidine Nucleoside Phosphorylase, Chain C"/>
    <property type="match status" value="1"/>
</dbReference>
<dbReference type="HAMAP" id="MF_01628">
    <property type="entry name" value="Thymid_phosp"/>
    <property type="match status" value="1"/>
</dbReference>
<dbReference type="InterPro" id="IPR000312">
    <property type="entry name" value="Glycosyl_Trfase_fam3"/>
</dbReference>
<dbReference type="InterPro" id="IPR017459">
    <property type="entry name" value="Glycosyl_Trfase_fam3_N_dom"/>
</dbReference>
<dbReference type="InterPro" id="IPR036320">
    <property type="entry name" value="Glycosyl_Trfase_fam3_N_dom_sf"/>
</dbReference>
<dbReference type="InterPro" id="IPR035902">
    <property type="entry name" value="Nuc_phospho_transferase"/>
</dbReference>
<dbReference type="InterPro" id="IPR036566">
    <property type="entry name" value="PYNP-like_C_sf"/>
</dbReference>
<dbReference type="InterPro" id="IPR013102">
    <property type="entry name" value="PYNP_C"/>
</dbReference>
<dbReference type="InterPro" id="IPR018090">
    <property type="entry name" value="Pyrmidine_PPas_bac/euk"/>
</dbReference>
<dbReference type="InterPro" id="IPR017872">
    <property type="entry name" value="Pyrmidine_PPase_CS"/>
</dbReference>
<dbReference type="InterPro" id="IPR000053">
    <property type="entry name" value="Thymidine/pyrmidine_PPase"/>
</dbReference>
<dbReference type="InterPro" id="IPR013465">
    <property type="entry name" value="Thymidine_Pase"/>
</dbReference>
<dbReference type="NCBIfam" id="NF004490">
    <property type="entry name" value="PRK05820.1"/>
    <property type="match status" value="1"/>
</dbReference>
<dbReference type="NCBIfam" id="TIGR02643">
    <property type="entry name" value="T_phosphoryl"/>
    <property type="match status" value="1"/>
</dbReference>
<dbReference type="NCBIfam" id="TIGR02644">
    <property type="entry name" value="Y_phosphoryl"/>
    <property type="match status" value="1"/>
</dbReference>
<dbReference type="PANTHER" id="PTHR10515">
    <property type="entry name" value="THYMIDINE PHOSPHORYLASE"/>
    <property type="match status" value="1"/>
</dbReference>
<dbReference type="PANTHER" id="PTHR10515:SF0">
    <property type="entry name" value="THYMIDINE PHOSPHORYLASE"/>
    <property type="match status" value="1"/>
</dbReference>
<dbReference type="Pfam" id="PF02885">
    <property type="entry name" value="Glycos_trans_3N"/>
    <property type="match status" value="1"/>
</dbReference>
<dbReference type="Pfam" id="PF00591">
    <property type="entry name" value="Glycos_transf_3"/>
    <property type="match status" value="1"/>
</dbReference>
<dbReference type="Pfam" id="PF07831">
    <property type="entry name" value="PYNP_C"/>
    <property type="match status" value="1"/>
</dbReference>
<dbReference type="PIRSF" id="PIRSF000478">
    <property type="entry name" value="TP_PyNP"/>
    <property type="match status" value="1"/>
</dbReference>
<dbReference type="SMART" id="SM00941">
    <property type="entry name" value="PYNP_C"/>
    <property type="match status" value="1"/>
</dbReference>
<dbReference type="SUPFAM" id="SSF52418">
    <property type="entry name" value="Nucleoside phosphorylase/phosphoribosyltransferase catalytic domain"/>
    <property type="match status" value="1"/>
</dbReference>
<dbReference type="SUPFAM" id="SSF47648">
    <property type="entry name" value="Nucleoside phosphorylase/phosphoribosyltransferase N-terminal domain"/>
    <property type="match status" value="1"/>
</dbReference>
<dbReference type="SUPFAM" id="SSF54680">
    <property type="entry name" value="Pyrimidine nucleoside phosphorylase C-terminal domain"/>
    <property type="match status" value="1"/>
</dbReference>
<dbReference type="PROSITE" id="PS00647">
    <property type="entry name" value="THYMID_PHOSPHORYLASE"/>
    <property type="match status" value="1"/>
</dbReference>
<evidence type="ECO:0000255" key="1">
    <source>
        <dbReference type="HAMAP-Rule" id="MF_01628"/>
    </source>
</evidence>
<name>TYPH_BURP0</name>
<feature type="chain" id="PRO_1000069657" description="Thymidine phosphorylase">
    <location>
        <begin position="1"/>
        <end position="440"/>
    </location>
</feature>
<comment type="function">
    <text evidence="1">The enzymes which catalyze the reversible phosphorolysis of pyrimidine nucleosides are involved in the degradation of these compounds and in their utilization as carbon and energy sources, or in the rescue of pyrimidine bases for nucleotide synthesis.</text>
</comment>
<comment type="catalytic activity">
    <reaction evidence="1">
        <text>thymidine + phosphate = 2-deoxy-alpha-D-ribose 1-phosphate + thymine</text>
        <dbReference type="Rhea" id="RHEA:16037"/>
        <dbReference type="ChEBI" id="CHEBI:17748"/>
        <dbReference type="ChEBI" id="CHEBI:17821"/>
        <dbReference type="ChEBI" id="CHEBI:43474"/>
        <dbReference type="ChEBI" id="CHEBI:57259"/>
        <dbReference type="EC" id="2.4.2.4"/>
    </reaction>
</comment>
<comment type="pathway">
    <text evidence="1">Pyrimidine metabolism; dTMP biosynthesis via salvage pathway; dTMP from thymine: step 1/2.</text>
</comment>
<comment type="subunit">
    <text evidence="1">Homodimer.</text>
</comment>
<comment type="similarity">
    <text evidence="1">Belongs to the thymidine/pyrimidine-nucleoside phosphorylase family.</text>
</comment>
<keyword id="KW-0328">Glycosyltransferase</keyword>
<keyword id="KW-0808">Transferase</keyword>
<protein>
    <recommendedName>
        <fullName evidence="1">Thymidine phosphorylase</fullName>
        <ecNumber evidence="1">2.4.2.4</ecNumber>
    </recommendedName>
    <alternativeName>
        <fullName evidence="1">TdRPase</fullName>
    </alternativeName>
</protein>
<organism>
    <name type="scientific">Burkholderia pseudomallei (strain 1106a)</name>
    <dbReference type="NCBI Taxonomy" id="357348"/>
    <lineage>
        <taxon>Bacteria</taxon>
        <taxon>Pseudomonadati</taxon>
        <taxon>Pseudomonadota</taxon>
        <taxon>Betaproteobacteria</taxon>
        <taxon>Burkholderiales</taxon>
        <taxon>Burkholderiaceae</taxon>
        <taxon>Burkholderia</taxon>
        <taxon>pseudomallei group</taxon>
    </lineage>
</organism>
<accession>A3P8N2</accession>
<gene>
    <name evidence="1" type="primary">deoA</name>
    <name type="ordered locus">BURPS1106A_A2662</name>
</gene>